<comment type="function">
    <text evidence="1">Catalyzes the oxidation of either pyridoxine 5'-phosphate (PNP) or pyridoxamine 5'-phosphate (PMP) into pyridoxal 5'-phosphate (PLP).</text>
</comment>
<comment type="catalytic activity">
    <reaction evidence="1">
        <text>pyridoxamine 5'-phosphate + O2 + H2O = pyridoxal 5'-phosphate + H2O2 + NH4(+)</text>
        <dbReference type="Rhea" id="RHEA:15817"/>
        <dbReference type="ChEBI" id="CHEBI:15377"/>
        <dbReference type="ChEBI" id="CHEBI:15379"/>
        <dbReference type="ChEBI" id="CHEBI:16240"/>
        <dbReference type="ChEBI" id="CHEBI:28938"/>
        <dbReference type="ChEBI" id="CHEBI:58451"/>
        <dbReference type="ChEBI" id="CHEBI:597326"/>
        <dbReference type="EC" id="1.4.3.5"/>
    </reaction>
</comment>
<comment type="catalytic activity">
    <reaction evidence="1">
        <text>pyridoxine 5'-phosphate + O2 = pyridoxal 5'-phosphate + H2O2</text>
        <dbReference type="Rhea" id="RHEA:15149"/>
        <dbReference type="ChEBI" id="CHEBI:15379"/>
        <dbReference type="ChEBI" id="CHEBI:16240"/>
        <dbReference type="ChEBI" id="CHEBI:58589"/>
        <dbReference type="ChEBI" id="CHEBI:597326"/>
        <dbReference type="EC" id="1.4.3.5"/>
    </reaction>
</comment>
<comment type="cofactor">
    <cofactor evidence="1">
        <name>FMN</name>
        <dbReference type="ChEBI" id="CHEBI:58210"/>
    </cofactor>
    <text evidence="1">Binds 1 FMN per subunit.</text>
</comment>
<comment type="pathway">
    <text evidence="1">Cofactor metabolism; pyridoxal 5'-phosphate salvage; pyridoxal 5'-phosphate from pyridoxamine 5'-phosphate: step 1/1.</text>
</comment>
<comment type="pathway">
    <text evidence="1">Cofactor metabolism; pyridoxal 5'-phosphate salvage; pyridoxal 5'-phosphate from pyridoxine 5'-phosphate: step 1/1.</text>
</comment>
<comment type="subunit">
    <text evidence="1">Homodimer.</text>
</comment>
<comment type="similarity">
    <text evidence="1">Belongs to the pyridoxamine 5'-phosphate oxidase family.</text>
</comment>
<comment type="sequence caution" evidence="2">
    <conflict type="erroneous initiation">
        <sequence resource="EMBL-CDS" id="ABR77407"/>
    </conflict>
</comment>
<gene>
    <name evidence="1" type="primary">pdxH</name>
    <name type="ordered locus">KPN78578_19460</name>
    <name type="ORF">KPN_01976</name>
</gene>
<sequence length="218" mass="25509">MSDNDELQQIAHLRREYTRGGLRRHDLPAEPLPLFERWLRQACDAKLADPTAMVVATVDERGQPYQRIVLLKHYDEKGLVFYTNLGSRKAHQIENNPQVSLLFPWHMLERQVMVIGKAERLSTLEVVKYFHSRPRDSQIGAWVSKQSSRISARGILESKFLELKQKFQQGEVPLPSFWGGFRVSIEQMEFWQGGEHRLHDRFLYQRDSGAWKIDRLAP</sequence>
<name>PDXH_KLEP7</name>
<feature type="chain" id="PRO_0000335789" description="Pyridoxine/pyridoxamine 5'-phosphate oxidase">
    <location>
        <begin position="1"/>
        <end position="218"/>
    </location>
</feature>
<feature type="binding site" evidence="1">
    <location>
        <begin position="14"/>
        <end position="17"/>
    </location>
    <ligand>
        <name>substrate</name>
    </ligand>
</feature>
<feature type="binding site" evidence="1">
    <location>
        <begin position="67"/>
        <end position="72"/>
    </location>
    <ligand>
        <name>FMN</name>
        <dbReference type="ChEBI" id="CHEBI:58210"/>
    </ligand>
</feature>
<feature type="binding site" evidence="1">
    <location>
        <position position="72"/>
    </location>
    <ligand>
        <name>substrate</name>
    </ligand>
</feature>
<feature type="binding site" evidence="1">
    <location>
        <begin position="82"/>
        <end position="83"/>
    </location>
    <ligand>
        <name>FMN</name>
        <dbReference type="ChEBI" id="CHEBI:58210"/>
    </ligand>
</feature>
<feature type="binding site" evidence="1">
    <location>
        <position position="88"/>
    </location>
    <ligand>
        <name>FMN</name>
        <dbReference type="ChEBI" id="CHEBI:58210"/>
    </ligand>
</feature>
<feature type="binding site" evidence="1">
    <location>
        <position position="89"/>
    </location>
    <ligand>
        <name>FMN</name>
        <dbReference type="ChEBI" id="CHEBI:58210"/>
    </ligand>
</feature>
<feature type="binding site" evidence="1">
    <location>
        <position position="111"/>
    </location>
    <ligand>
        <name>FMN</name>
        <dbReference type="ChEBI" id="CHEBI:58210"/>
    </ligand>
</feature>
<feature type="binding site" evidence="1">
    <location>
        <position position="129"/>
    </location>
    <ligand>
        <name>substrate</name>
    </ligand>
</feature>
<feature type="binding site" evidence="1">
    <location>
        <position position="133"/>
    </location>
    <ligand>
        <name>substrate</name>
    </ligand>
</feature>
<feature type="binding site" evidence="1">
    <location>
        <position position="137"/>
    </location>
    <ligand>
        <name>substrate</name>
    </ligand>
</feature>
<feature type="binding site" evidence="1">
    <location>
        <begin position="146"/>
        <end position="147"/>
    </location>
    <ligand>
        <name>FMN</name>
        <dbReference type="ChEBI" id="CHEBI:58210"/>
    </ligand>
</feature>
<feature type="binding site" evidence="1">
    <location>
        <position position="191"/>
    </location>
    <ligand>
        <name>FMN</name>
        <dbReference type="ChEBI" id="CHEBI:58210"/>
    </ligand>
</feature>
<feature type="binding site" evidence="1">
    <location>
        <begin position="197"/>
        <end position="199"/>
    </location>
    <ligand>
        <name>substrate</name>
    </ligand>
</feature>
<feature type="binding site" evidence="1">
    <location>
        <position position="201"/>
    </location>
    <ligand>
        <name>FMN</name>
        <dbReference type="ChEBI" id="CHEBI:58210"/>
    </ligand>
</feature>
<protein>
    <recommendedName>
        <fullName evidence="1">Pyridoxine/pyridoxamine 5'-phosphate oxidase</fullName>
        <ecNumber evidence="1">1.4.3.5</ecNumber>
    </recommendedName>
    <alternativeName>
        <fullName evidence="1">PNP/PMP oxidase</fullName>
        <shortName evidence="1">PNPOx</shortName>
    </alternativeName>
    <alternativeName>
        <fullName evidence="1">Pyridoxal 5'-phosphate synthase</fullName>
    </alternativeName>
</protein>
<accession>A6T9Y6</accession>
<reference key="1">
    <citation type="submission" date="2006-09" db="EMBL/GenBank/DDBJ databases">
        <authorList>
            <consortium name="The Klebsiella pneumonia Genome Sequencing Project"/>
            <person name="McClelland M."/>
            <person name="Sanderson E.K."/>
            <person name="Spieth J."/>
            <person name="Clifton W.S."/>
            <person name="Latreille P."/>
            <person name="Sabo A."/>
            <person name="Pepin K."/>
            <person name="Bhonagiri V."/>
            <person name="Porwollik S."/>
            <person name="Ali J."/>
            <person name="Wilson R.K."/>
        </authorList>
    </citation>
    <scope>NUCLEOTIDE SEQUENCE [LARGE SCALE GENOMIC DNA]</scope>
    <source>
        <strain>ATCC 700721 / MGH 78578</strain>
    </source>
</reference>
<evidence type="ECO:0000255" key="1">
    <source>
        <dbReference type="HAMAP-Rule" id="MF_01629"/>
    </source>
</evidence>
<evidence type="ECO:0000305" key="2"/>
<organism>
    <name type="scientific">Klebsiella pneumoniae subsp. pneumoniae (strain ATCC 700721 / MGH 78578)</name>
    <dbReference type="NCBI Taxonomy" id="272620"/>
    <lineage>
        <taxon>Bacteria</taxon>
        <taxon>Pseudomonadati</taxon>
        <taxon>Pseudomonadota</taxon>
        <taxon>Gammaproteobacteria</taxon>
        <taxon>Enterobacterales</taxon>
        <taxon>Enterobacteriaceae</taxon>
        <taxon>Klebsiella/Raoultella group</taxon>
        <taxon>Klebsiella</taxon>
        <taxon>Klebsiella pneumoniae complex</taxon>
    </lineage>
</organism>
<keyword id="KW-0285">Flavoprotein</keyword>
<keyword id="KW-0288">FMN</keyword>
<keyword id="KW-0560">Oxidoreductase</keyword>
<keyword id="KW-0664">Pyridoxine biosynthesis</keyword>
<dbReference type="EC" id="1.4.3.5" evidence="1"/>
<dbReference type="EMBL" id="CP000647">
    <property type="protein sequence ID" value="ABR77407.1"/>
    <property type="status" value="ALT_INIT"/>
    <property type="molecule type" value="Genomic_DNA"/>
</dbReference>
<dbReference type="RefSeq" id="WP_002907742.1">
    <property type="nucleotide sequence ID" value="NC_009648.1"/>
</dbReference>
<dbReference type="SMR" id="A6T9Y6"/>
<dbReference type="STRING" id="272620.KPN_01976"/>
<dbReference type="PaxDb" id="272620-KPN_01976"/>
<dbReference type="EnsemblBacteria" id="ABR77407">
    <property type="protein sequence ID" value="ABR77407"/>
    <property type="gene ID" value="KPN_01976"/>
</dbReference>
<dbReference type="KEGG" id="kpn:KPN_01976"/>
<dbReference type="HOGENOM" id="CLU_032263_2_2_6"/>
<dbReference type="UniPathway" id="UPA01068">
    <property type="reaction ID" value="UER00304"/>
</dbReference>
<dbReference type="UniPathway" id="UPA01068">
    <property type="reaction ID" value="UER00305"/>
</dbReference>
<dbReference type="Proteomes" id="UP000000265">
    <property type="component" value="Chromosome"/>
</dbReference>
<dbReference type="GO" id="GO:0010181">
    <property type="term" value="F:FMN binding"/>
    <property type="evidence" value="ECO:0007669"/>
    <property type="project" value="UniProtKB-UniRule"/>
</dbReference>
<dbReference type="GO" id="GO:0004733">
    <property type="term" value="F:pyridoxamine phosphate oxidase activity"/>
    <property type="evidence" value="ECO:0007669"/>
    <property type="project" value="UniProtKB-UniRule"/>
</dbReference>
<dbReference type="GO" id="GO:0008615">
    <property type="term" value="P:pyridoxine biosynthetic process"/>
    <property type="evidence" value="ECO:0007669"/>
    <property type="project" value="UniProtKB-KW"/>
</dbReference>
<dbReference type="FunFam" id="2.30.110.10:FF:000001">
    <property type="entry name" value="Pyridoxine/pyridoxamine 5'-phosphate oxidase"/>
    <property type="match status" value="1"/>
</dbReference>
<dbReference type="Gene3D" id="2.30.110.10">
    <property type="entry name" value="Electron Transport, Fmn-binding Protein, Chain A"/>
    <property type="match status" value="1"/>
</dbReference>
<dbReference type="HAMAP" id="MF_01629">
    <property type="entry name" value="PdxH"/>
    <property type="match status" value="1"/>
</dbReference>
<dbReference type="InterPro" id="IPR000659">
    <property type="entry name" value="Pyridox_Oxase"/>
</dbReference>
<dbReference type="InterPro" id="IPR019740">
    <property type="entry name" value="Pyridox_Oxase_CS"/>
</dbReference>
<dbReference type="InterPro" id="IPR011576">
    <property type="entry name" value="Pyridox_Oxase_N"/>
</dbReference>
<dbReference type="InterPro" id="IPR019576">
    <property type="entry name" value="Pyridoxamine_oxidase_dimer_C"/>
</dbReference>
<dbReference type="InterPro" id="IPR012349">
    <property type="entry name" value="Split_barrel_FMN-bd"/>
</dbReference>
<dbReference type="NCBIfam" id="TIGR00558">
    <property type="entry name" value="pdxH"/>
    <property type="match status" value="1"/>
</dbReference>
<dbReference type="NCBIfam" id="NF004231">
    <property type="entry name" value="PRK05679.1"/>
    <property type="match status" value="1"/>
</dbReference>
<dbReference type="PANTHER" id="PTHR10851:SF0">
    <property type="entry name" value="PYRIDOXINE-5'-PHOSPHATE OXIDASE"/>
    <property type="match status" value="1"/>
</dbReference>
<dbReference type="PANTHER" id="PTHR10851">
    <property type="entry name" value="PYRIDOXINE-5-PHOSPHATE OXIDASE"/>
    <property type="match status" value="1"/>
</dbReference>
<dbReference type="Pfam" id="PF10590">
    <property type="entry name" value="PNP_phzG_C"/>
    <property type="match status" value="1"/>
</dbReference>
<dbReference type="Pfam" id="PF01243">
    <property type="entry name" value="PNPOx_N"/>
    <property type="match status" value="1"/>
</dbReference>
<dbReference type="PIRSF" id="PIRSF000190">
    <property type="entry name" value="Pyd_amn-ph_oxd"/>
    <property type="match status" value="1"/>
</dbReference>
<dbReference type="SUPFAM" id="SSF50475">
    <property type="entry name" value="FMN-binding split barrel"/>
    <property type="match status" value="1"/>
</dbReference>
<dbReference type="PROSITE" id="PS01064">
    <property type="entry name" value="PYRIDOX_OXIDASE"/>
    <property type="match status" value="1"/>
</dbReference>
<proteinExistence type="inferred from homology"/>